<gene>
    <name evidence="11 13" type="primary">PARP12</name>
    <name type="synonym">ZC3HDC1</name>
</gene>
<evidence type="ECO:0000255" key="1">
    <source>
        <dbReference type="PROSITE-ProRule" id="PRU00248"/>
    </source>
</evidence>
<evidence type="ECO:0000255" key="2">
    <source>
        <dbReference type="PROSITE-ProRule" id="PRU00397"/>
    </source>
</evidence>
<evidence type="ECO:0000255" key="3">
    <source>
        <dbReference type="PROSITE-ProRule" id="PRU00723"/>
    </source>
</evidence>
<evidence type="ECO:0000256" key="4">
    <source>
        <dbReference type="SAM" id="MobiDB-lite"/>
    </source>
</evidence>
<evidence type="ECO:0000269" key="5">
    <source>
    </source>
</evidence>
<evidence type="ECO:0000269" key="6">
    <source>
    </source>
</evidence>
<evidence type="ECO:0000269" key="7">
    <source>
    </source>
</evidence>
<evidence type="ECO:0000269" key="8">
    <source>
    </source>
</evidence>
<evidence type="ECO:0000269" key="9">
    <source>
    </source>
</evidence>
<evidence type="ECO:0000269" key="10">
    <source>
    </source>
</evidence>
<evidence type="ECO:0000303" key="11">
    <source>
    </source>
</evidence>
<evidence type="ECO:0000305" key="12"/>
<evidence type="ECO:0000312" key="13">
    <source>
        <dbReference type="HGNC" id="HGNC:21919"/>
    </source>
</evidence>
<evidence type="ECO:0007744" key="14">
    <source>
    </source>
</evidence>
<evidence type="ECO:0007829" key="15">
    <source>
        <dbReference type="PDB" id="8XPX"/>
    </source>
</evidence>
<accession>Q9H0J9</accession>
<accession>Q9H610</accession>
<accession>Q9NP36</accession>
<accession>Q9NTI3</accession>
<keyword id="KW-0002">3D-structure</keyword>
<keyword id="KW-0013">ADP-ribosylation</keyword>
<keyword id="KW-0963">Cytoplasm</keyword>
<keyword id="KW-0328">Glycosyltransferase</keyword>
<keyword id="KW-0333">Golgi apparatus</keyword>
<keyword id="KW-0479">Metal-binding</keyword>
<keyword id="KW-0520">NAD</keyword>
<keyword id="KW-0548">Nucleotidyltransferase</keyword>
<keyword id="KW-0539">Nucleus</keyword>
<keyword id="KW-0597">Phosphoprotein</keyword>
<keyword id="KW-1267">Proteomics identification</keyword>
<keyword id="KW-1185">Reference proteome</keyword>
<keyword id="KW-0677">Repeat</keyword>
<keyword id="KW-0808">Transferase</keyword>
<keyword id="KW-0862">Zinc</keyword>
<keyword id="KW-0863">Zinc-finger</keyword>
<reference key="1">
    <citation type="journal article" date="2001" name="Genome Res.">
        <title>Towards a catalog of human genes and proteins: sequencing and analysis of 500 novel complete protein coding human cDNAs.</title>
        <authorList>
            <person name="Wiemann S."/>
            <person name="Weil B."/>
            <person name="Wellenreuther R."/>
            <person name="Gassenhuber J."/>
            <person name="Glassl S."/>
            <person name="Ansorge W."/>
            <person name="Boecher M."/>
            <person name="Bloecker H."/>
            <person name="Bauersachs S."/>
            <person name="Blum H."/>
            <person name="Lauber J."/>
            <person name="Duesterhoeft A."/>
            <person name="Beyer A."/>
            <person name="Koehrer K."/>
            <person name="Strack N."/>
            <person name="Mewes H.-W."/>
            <person name="Ottenwaelder B."/>
            <person name="Obermaier B."/>
            <person name="Tampe J."/>
            <person name="Heubner D."/>
            <person name="Wambutt R."/>
            <person name="Korn B."/>
            <person name="Klein M."/>
            <person name="Poustka A."/>
        </authorList>
    </citation>
    <scope>NUCLEOTIDE SEQUENCE [LARGE SCALE MRNA]</scope>
    <source>
        <tissue>Testis</tissue>
    </source>
</reference>
<reference key="2">
    <citation type="journal article" date="2003" name="Nature">
        <title>The DNA sequence of human chromosome 7.</title>
        <authorList>
            <person name="Hillier L.W."/>
            <person name="Fulton R.S."/>
            <person name="Fulton L.A."/>
            <person name="Graves T.A."/>
            <person name="Pepin K.H."/>
            <person name="Wagner-McPherson C."/>
            <person name="Layman D."/>
            <person name="Maas J."/>
            <person name="Jaeger S."/>
            <person name="Walker R."/>
            <person name="Wylie K."/>
            <person name="Sekhon M."/>
            <person name="Becker M.C."/>
            <person name="O'Laughlin M.D."/>
            <person name="Schaller M.E."/>
            <person name="Fewell G.A."/>
            <person name="Delehaunty K.D."/>
            <person name="Miner T.L."/>
            <person name="Nash W.E."/>
            <person name="Cordes M."/>
            <person name="Du H."/>
            <person name="Sun H."/>
            <person name="Edwards J."/>
            <person name="Bradshaw-Cordum H."/>
            <person name="Ali J."/>
            <person name="Andrews S."/>
            <person name="Isak A."/>
            <person name="Vanbrunt A."/>
            <person name="Nguyen C."/>
            <person name="Du F."/>
            <person name="Lamar B."/>
            <person name="Courtney L."/>
            <person name="Kalicki J."/>
            <person name="Ozersky P."/>
            <person name="Bielicki L."/>
            <person name="Scott K."/>
            <person name="Holmes A."/>
            <person name="Harkins R."/>
            <person name="Harris A."/>
            <person name="Strong C.M."/>
            <person name="Hou S."/>
            <person name="Tomlinson C."/>
            <person name="Dauphin-Kohlberg S."/>
            <person name="Kozlowicz-Reilly A."/>
            <person name="Leonard S."/>
            <person name="Rohlfing T."/>
            <person name="Rock S.M."/>
            <person name="Tin-Wollam A.-M."/>
            <person name="Abbott A."/>
            <person name="Minx P."/>
            <person name="Maupin R."/>
            <person name="Strowmatt C."/>
            <person name="Latreille P."/>
            <person name="Miller N."/>
            <person name="Johnson D."/>
            <person name="Murray J."/>
            <person name="Woessner J.P."/>
            <person name="Wendl M.C."/>
            <person name="Yang S.-P."/>
            <person name="Schultz B.R."/>
            <person name="Wallis J.W."/>
            <person name="Spieth J."/>
            <person name="Bieri T.A."/>
            <person name="Nelson J.O."/>
            <person name="Berkowicz N."/>
            <person name="Wohldmann P.E."/>
            <person name="Cook L.L."/>
            <person name="Hickenbotham M.T."/>
            <person name="Eldred J."/>
            <person name="Williams D."/>
            <person name="Bedell J.A."/>
            <person name="Mardis E.R."/>
            <person name="Clifton S.W."/>
            <person name="Chissoe S.L."/>
            <person name="Marra M.A."/>
            <person name="Raymond C."/>
            <person name="Haugen E."/>
            <person name="Gillett W."/>
            <person name="Zhou Y."/>
            <person name="James R."/>
            <person name="Phelps K."/>
            <person name="Iadanoto S."/>
            <person name="Bubb K."/>
            <person name="Simms E."/>
            <person name="Levy R."/>
            <person name="Clendenning J."/>
            <person name="Kaul R."/>
            <person name="Kent W.J."/>
            <person name="Furey T.S."/>
            <person name="Baertsch R.A."/>
            <person name="Brent M.R."/>
            <person name="Keibler E."/>
            <person name="Flicek P."/>
            <person name="Bork P."/>
            <person name="Suyama M."/>
            <person name="Bailey J.A."/>
            <person name="Portnoy M.E."/>
            <person name="Torrents D."/>
            <person name="Chinwalla A.T."/>
            <person name="Gish W.R."/>
            <person name="Eddy S.R."/>
            <person name="McPherson J.D."/>
            <person name="Olson M.V."/>
            <person name="Eichler E.E."/>
            <person name="Green E.D."/>
            <person name="Waterston R.H."/>
            <person name="Wilson R.K."/>
        </authorList>
    </citation>
    <scope>NUCLEOTIDE SEQUENCE [LARGE SCALE GENOMIC DNA]</scope>
</reference>
<reference key="3">
    <citation type="journal article" date="2004" name="Genome Res.">
        <title>The status, quality, and expansion of the NIH full-length cDNA project: the Mammalian Gene Collection (MGC).</title>
        <authorList>
            <consortium name="The MGC Project Team"/>
        </authorList>
    </citation>
    <scope>NUCLEOTIDE SEQUENCE [LARGE SCALE MRNA]</scope>
    <source>
        <tissue>Testis</tissue>
    </source>
</reference>
<reference key="4">
    <citation type="journal article" date="2004" name="Nat. Genet.">
        <title>Complete sequencing and characterization of 21,243 full-length human cDNAs.</title>
        <authorList>
            <person name="Ota T."/>
            <person name="Suzuki Y."/>
            <person name="Nishikawa T."/>
            <person name="Otsuki T."/>
            <person name="Sugiyama T."/>
            <person name="Irie R."/>
            <person name="Wakamatsu A."/>
            <person name="Hayashi K."/>
            <person name="Sato H."/>
            <person name="Nagai K."/>
            <person name="Kimura K."/>
            <person name="Makita H."/>
            <person name="Sekine M."/>
            <person name="Obayashi M."/>
            <person name="Nishi T."/>
            <person name="Shibahara T."/>
            <person name="Tanaka T."/>
            <person name="Ishii S."/>
            <person name="Yamamoto J."/>
            <person name="Saito K."/>
            <person name="Kawai Y."/>
            <person name="Isono Y."/>
            <person name="Nakamura Y."/>
            <person name="Nagahari K."/>
            <person name="Murakami K."/>
            <person name="Yasuda T."/>
            <person name="Iwayanagi T."/>
            <person name="Wagatsuma M."/>
            <person name="Shiratori A."/>
            <person name="Sudo H."/>
            <person name="Hosoiri T."/>
            <person name="Kaku Y."/>
            <person name="Kodaira H."/>
            <person name="Kondo H."/>
            <person name="Sugawara M."/>
            <person name="Takahashi M."/>
            <person name="Kanda K."/>
            <person name="Yokoi T."/>
            <person name="Furuya T."/>
            <person name="Kikkawa E."/>
            <person name="Omura Y."/>
            <person name="Abe K."/>
            <person name="Kamihara K."/>
            <person name="Katsuta N."/>
            <person name="Sato K."/>
            <person name="Tanikawa M."/>
            <person name="Yamazaki M."/>
            <person name="Ninomiya K."/>
            <person name="Ishibashi T."/>
            <person name="Yamashita H."/>
            <person name="Murakawa K."/>
            <person name="Fujimori K."/>
            <person name="Tanai H."/>
            <person name="Kimata M."/>
            <person name="Watanabe M."/>
            <person name="Hiraoka S."/>
            <person name="Chiba Y."/>
            <person name="Ishida S."/>
            <person name="Ono Y."/>
            <person name="Takiguchi S."/>
            <person name="Watanabe S."/>
            <person name="Yosida M."/>
            <person name="Hotuta T."/>
            <person name="Kusano J."/>
            <person name="Kanehori K."/>
            <person name="Takahashi-Fujii A."/>
            <person name="Hara H."/>
            <person name="Tanase T.-O."/>
            <person name="Nomura Y."/>
            <person name="Togiya S."/>
            <person name="Komai F."/>
            <person name="Hara R."/>
            <person name="Takeuchi K."/>
            <person name="Arita M."/>
            <person name="Imose N."/>
            <person name="Musashino K."/>
            <person name="Yuuki H."/>
            <person name="Oshima A."/>
            <person name="Sasaki N."/>
            <person name="Aotsuka S."/>
            <person name="Yoshikawa Y."/>
            <person name="Matsunawa H."/>
            <person name="Ichihara T."/>
            <person name="Shiohata N."/>
            <person name="Sano S."/>
            <person name="Moriya S."/>
            <person name="Momiyama H."/>
            <person name="Satoh N."/>
            <person name="Takami S."/>
            <person name="Terashima Y."/>
            <person name="Suzuki O."/>
            <person name="Nakagawa S."/>
            <person name="Senoh A."/>
            <person name="Mizoguchi H."/>
            <person name="Goto Y."/>
            <person name="Shimizu F."/>
            <person name="Wakebe H."/>
            <person name="Hishigaki H."/>
            <person name="Watanabe T."/>
            <person name="Sugiyama A."/>
            <person name="Takemoto M."/>
            <person name="Kawakami B."/>
            <person name="Yamazaki M."/>
            <person name="Watanabe K."/>
            <person name="Kumagai A."/>
            <person name="Itakura S."/>
            <person name="Fukuzumi Y."/>
            <person name="Fujimori Y."/>
            <person name="Komiyama M."/>
            <person name="Tashiro H."/>
            <person name="Tanigami A."/>
            <person name="Fujiwara T."/>
            <person name="Ono T."/>
            <person name="Yamada K."/>
            <person name="Fujii Y."/>
            <person name="Ozaki K."/>
            <person name="Hirao M."/>
            <person name="Ohmori Y."/>
            <person name="Kawabata A."/>
            <person name="Hikiji T."/>
            <person name="Kobatake N."/>
            <person name="Inagaki H."/>
            <person name="Ikema Y."/>
            <person name="Okamoto S."/>
            <person name="Okitani R."/>
            <person name="Kawakami T."/>
            <person name="Noguchi S."/>
            <person name="Itoh T."/>
            <person name="Shigeta K."/>
            <person name="Senba T."/>
            <person name="Matsumura K."/>
            <person name="Nakajima Y."/>
            <person name="Mizuno T."/>
            <person name="Morinaga M."/>
            <person name="Sasaki M."/>
            <person name="Togashi T."/>
            <person name="Oyama M."/>
            <person name="Hata H."/>
            <person name="Watanabe M."/>
            <person name="Komatsu T."/>
            <person name="Mizushima-Sugano J."/>
            <person name="Satoh T."/>
            <person name="Shirai Y."/>
            <person name="Takahashi Y."/>
            <person name="Nakagawa K."/>
            <person name="Okumura K."/>
            <person name="Nagase T."/>
            <person name="Nomura N."/>
            <person name="Kikuchi H."/>
            <person name="Masuho Y."/>
            <person name="Yamashita R."/>
            <person name="Nakai K."/>
            <person name="Yada T."/>
            <person name="Nakamura Y."/>
            <person name="Ohara O."/>
            <person name="Isogai T."/>
            <person name="Sugano S."/>
        </authorList>
    </citation>
    <scope>NUCLEOTIDE SEQUENCE [LARGE SCALE MRNA] OF 444-701</scope>
    <source>
        <tissue>Small intestine</tissue>
    </source>
</reference>
<reference key="5">
    <citation type="journal article" date="2008" name="Proc. Natl. Acad. Sci. U.S.A.">
        <title>A quantitative atlas of mitotic phosphorylation.</title>
        <authorList>
            <person name="Dephoure N."/>
            <person name="Zhou C."/>
            <person name="Villen J."/>
            <person name="Beausoleil S.A."/>
            <person name="Bakalarski C.E."/>
            <person name="Elledge S.J."/>
            <person name="Gygi S.P."/>
        </authorList>
    </citation>
    <scope>IDENTIFICATION BY MASS SPECTROMETRY [LARGE SCALE ANALYSIS]</scope>
    <source>
        <tissue>Cervix carcinoma</tissue>
    </source>
</reference>
<reference key="6">
    <citation type="journal article" date="2010" name="Sci. Signal.">
        <title>Quantitative phosphoproteomics reveals widespread full phosphorylation site occupancy during mitosis.</title>
        <authorList>
            <person name="Olsen J.V."/>
            <person name="Vermeulen M."/>
            <person name="Santamaria A."/>
            <person name="Kumar C."/>
            <person name="Miller M.L."/>
            <person name="Jensen L.J."/>
            <person name="Gnad F."/>
            <person name="Cox J."/>
            <person name="Jensen T.S."/>
            <person name="Nigg E.A."/>
            <person name="Brunak S."/>
            <person name="Mann M."/>
        </authorList>
    </citation>
    <scope>IDENTIFICATION BY MASS SPECTROMETRY [LARGE SCALE ANALYSIS]</scope>
    <source>
        <tissue>Cervix carcinoma</tissue>
    </source>
</reference>
<reference key="7">
    <citation type="journal article" date="2010" name="Trends Biochem. Sci.">
        <title>Toward a unified nomenclature for mammalian ADP-ribosyltransferases.</title>
        <authorList>
            <person name="Hottiger M.O."/>
            <person name="Hassa P.O."/>
            <person name="Luscher B."/>
            <person name="Schuler H."/>
            <person name="Koch-Nolte F."/>
        </authorList>
    </citation>
    <scope>NOMENCLATURE</scope>
</reference>
<reference key="8">
    <citation type="journal article" date="2013" name="J. Proteome Res.">
        <title>Toward a comprehensive characterization of a human cancer cell phosphoproteome.</title>
        <authorList>
            <person name="Zhou H."/>
            <person name="Di Palma S."/>
            <person name="Preisinger C."/>
            <person name="Peng M."/>
            <person name="Polat A.N."/>
            <person name="Heck A.J."/>
            <person name="Mohammed S."/>
        </authorList>
    </citation>
    <scope>IDENTIFICATION BY MASS SPECTROMETRY [LARGE SCALE ANALYSIS]</scope>
    <source>
        <tissue>Cervix carcinoma</tissue>
        <tissue>Erythroleukemia</tissue>
    </source>
</reference>
<reference key="9">
    <citation type="journal article" date="2014" name="J. Proteomics">
        <title>An enzyme assisted RP-RPLC approach for in-depth analysis of human liver phosphoproteome.</title>
        <authorList>
            <person name="Bian Y."/>
            <person name="Song C."/>
            <person name="Cheng K."/>
            <person name="Dong M."/>
            <person name="Wang F."/>
            <person name="Huang J."/>
            <person name="Sun D."/>
            <person name="Wang L."/>
            <person name="Ye M."/>
            <person name="Zou H."/>
        </authorList>
    </citation>
    <scope>PHOSPHORYLATION [LARGE SCALE ANALYSIS] AT SER-258</scope>
    <scope>IDENTIFICATION BY MASS SPECTROMETRY [LARGE SCALE ANALYSIS]</scope>
    <source>
        <tissue>Liver</tissue>
    </source>
</reference>
<reference key="10">
    <citation type="journal article" date="2014" name="Nat. Commun.">
        <title>Family-wide analysis of poly(ADP-ribose) polymerase activity.</title>
        <authorList>
            <person name="Vyas S."/>
            <person name="Matic I."/>
            <person name="Uchima L."/>
            <person name="Rood J."/>
            <person name="Zaja R."/>
            <person name="Hay R.T."/>
            <person name="Ahel I."/>
            <person name="Chang P."/>
        </authorList>
    </citation>
    <scope>FUNCTION</scope>
    <scope>CATALYTIC ACTIVITY</scope>
    <scope>ADP-RIBOSYLATION AT CYS-474; ASP-600 AND ASP-611</scope>
</reference>
<reference key="11">
    <citation type="journal article" date="2017" name="Sci. Rep.">
        <title>PARP1-produced poly-ADP-ribose causes the PARP12 translocation to stress granules and impairment of Golgi complex functions.</title>
        <authorList>
            <person name="Catara G."/>
            <person name="Grimaldi G."/>
            <person name="Schembri L."/>
            <person name="Spano D."/>
            <person name="Turacchio G."/>
            <person name="Lo Monte M."/>
            <person name="Beccari A.R."/>
            <person name="Valente C."/>
            <person name="Corda D."/>
        </authorList>
    </citation>
    <scope>SUBCELLULAR LOCATION</scope>
    <scope>MUTAGENESIS OF HIS-564 AND ILE-660</scope>
</reference>
<reference key="12">
    <citation type="journal article" date="2021" name="Cell Biosci.">
        <title>ADP-ribosyltransferase PARP11 suppresses Zika virus in synergy with PARP12.</title>
        <authorList>
            <person name="Li L."/>
            <person name="Shi Y."/>
            <person name="Li S."/>
            <person name="Liu J."/>
            <person name="Zu S."/>
            <person name="Xu X."/>
            <person name="Gao M."/>
            <person name="Sun N."/>
            <person name="Pan C."/>
            <person name="Peng L."/>
            <person name="Yang H."/>
            <person name="Cheng G."/>
        </authorList>
    </citation>
    <scope>FUNCTION</scope>
    <scope>INTERACTION WITH PARP11</scope>
</reference>
<reference key="13">
    <citation type="journal article" date="2022" name="Proc. Natl. Acad. Sci. U.S.A.">
        <title>PKD-dependent PARP12-catalyzed mono-ADP-ribosylation of Golgin-97 is required for E-cadherin transport from Golgi to plasma membrane.</title>
        <authorList>
            <person name="Grimaldi G."/>
            <person name="Filograna A."/>
            <person name="Schembri L."/>
            <person name="Lo Monte M."/>
            <person name="Di Martino R."/>
            <person name="Pirozzi M."/>
            <person name="Spano D."/>
            <person name="Beccari A.R."/>
            <person name="Parashuraman S."/>
            <person name="Luini A."/>
            <person name="Valente C."/>
            <person name="Corda D."/>
        </authorList>
    </citation>
    <scope>FUNCTION</scope>
    <scope>PHOSPHORYLATION</scope>
    <scope>CATALYTIC ACTIVITY</scope>
</reference>
<reference key="14">
    <citation type="journal article" date="2024" name="Bone Res.">
        <title>IRF1-mediated upregulation of PARP12 promotes cartilage degradation by inhibiting PINK1/Parkin dependent mitophagy through ISG15 attenuating ubiquitylation and SUMOylation of MFN1/2.</title>
        <authorList>
            <person name="Deng Z."/>
            <person name="Long D."/>
            <person name="Li C."/>
            <person name="Liu H."/>
            <person name="Li W."/>
            <person name="Zhong Y."/>
            <person name="Mo X."/>
            <person name="Li R."/>
            <person name="Yang Z."/>
            <person name="Kang Y."/>
            <person name="Mao G."/>
        </authorList>
    </citation>
    <scope>FUNCTION</scope>
    <scope>INTERACTION WITH ISG15</scope>
    <scope>SUBCELLULAR LOCATION</scope>
</reference>
<reference key="15">
    <citation type="journal article" date="2025" name="Sci. Adv.">
        <title>Zinc-finger PARP proteins ADP-ribosylate alphaviral proteins and are required for interferon-gamma-mediated antiviral immunity.</title>
        <authorList>
            <person name="Ryan A.P."/>
            <person name="Delgado-Rodriguez S.E."/>
            <person name="Daugherty M.D."/>
        </authorList>
    </citation>
    <scope>FUNCTION</scope>
    <scope>SUBCELLULAR LOCATION</scope>
</reference>
<reference key="16">
    <citation type="journal article" date="2015" name="J. Biol. Chem.">
        <title>Structural basis for lack of ADP-ribosyltransferase activity in poly(ADP-ribose) polymerase-13/zinc finger antiviral protein.</title>
        <authorList>
            <person name="Karlberg T."/>
            <person name="Klepsch M."/>
            <person name="Thorsell A.G."/>
            <person name="Andersson C.D."/>
            <person name="Linusson A."/>
            <person name="Schuler H."/>
        </authorList>
    </citation>
    <scope>X-RAY CRYSTALLOGRAPHY (2.20 ANGSTROMS) OF 489-684</scope>
</reference>
<proteinExistence type="evidence at protein level"/>
<sequence length="701" mass="79064">MAQAGVVGEVTQVLCAAGGALELPELRRRLRMGLSADALERLLRQRGRFVVAVRAGGAAAAPERVVLAASPLRLCRAHQGSKPGCVGLCAQLHLCRFMVYGACKFLRAGKNCRNSHSLTTEHNLSVLRTHGVDHLSYNELCQLLFQNDPWLLPEICQHYNKGDGPHGSCAFQKQCIKLHICQYFLQGECKFGTSCKRSHDFSNSENLEKLEKLGMSSDLVSRLPTIYRNAHDIKNKSSAPSRVPPLFVPQGTSERKDSSGSVSPNTLSQEEGDQICLYHIRKSCSFQDKCHRVHFHLPYRWQFLDRGKWEDLDNMELIEEAYCNPKIERILCSESASTFHSHCLNFNAMTYGATQARRLSTASSVTKPPHFILTTDWIWYWSDEFGSWQEYGRQGTVHPVTTVSSSDVEKAYLAYCTPGSDGQAATLKFQAGKHNYELDFKAFVQKNLVYGTTKKVCRRPKYVSPQDVTTMQTCNTKFPGPKSIPDYWDSSALPDPGFQKITLSSSSEEYQKVWNLFNRTLPFYFVQKIERVQNLALWEVYQWQKGQMQKQNGGKAVDERQLFHGTSAIFVDAICQQNFDWRVCGVHGTSYGKGSYFARDAAYSHHYSKSDTQTHTMFLARVLVGEFVRGNASFVRPPAKEGWSNAFYDSCVNSVSDPSIFVIFEKHQVYPEYVIQYTTSSKPSVTPSILLALGSLFSSRQ</sequence>
<name>PAR12_HUMAN</name>
<comment type="function">
    <text evidence="5 7 8 9 10">Mono-ADP-ribosyltransferase that mediates mono-ADP-ribosylation of target proteins (PubMed:25043379, PubMed:34969853). Acts as an antiviral factor by cooperating with PARP11 to suppress Zika virus replication (PubMed:34187568). Displays anti-alphavirus activity during IFN-gamma immune activation by directly ADP-ribosylating the alphaviral non-structural proteins nsP3 and nsP4 (PubMed:39888989). Acts as a component of the PRKD1-driven regulatory cascade that selectively controls a major branch of the basolateral transport pathway by catalyzing the MARylation of GOLGA1 (PubMed:34969853). Acts also as a key regulator of mitochondrial function, protein translation, and inflammation. Inhibits PINK1/Parkin-dependent mitophagy and promotes cartilage degeneration by inhibiting the ubiquitination and SUMOylation of MFN1/2 by upregulating ISG15 and ISGylation (PubMed:39465252).</text>
</comment>
<comment type="catalytic activity">
    <reaction evidence="5">
        <text>L-aspartyl-[protein] + NAD(+) = 4-O-(ADP-D-ribosyl)-L-aspartyl-[protein] + nicotinamide</text>
        <dbReference type="Rhea" id="RHEA:54424"/>
        <dbReference type="Rhea" id="RHEA-COMP:9867"/>
        <dbReference type="Rhea" id="RHEA-COMP:13832"/>
        <dbReference type="ChEBI" id="CHEBI:17154"/>
        <dbReference type="ChEBI" id="CHEBI:29961"/>
        <dbReference type="ChEBI" id="CHEBI:57540"/>
        <dbReference type="ChEBI" id="CHEBI:138102"/>
    </reaction>
    <physiologicalReaction direction="left-to-right" evidence="5">
        <dbReference type="Rhea" id="RHEA:54425"/>
    </physiologicalReaction>
</comment>
<comment type="catalytic activity">
    <reaction evidence="5">
        <text>L-cysteinyl-[protein] + NAD(+) = S-(ADP-D-ribosyl)-L-cysteinyl-[protein] + nicotinamide + H(+)</text>
        <dbReference type="Rhea" id="RHEA:56612"/>
        <dbReference type="Rhea" id="RHEA-COMP:10131"/>
        <dbReference type="Rhea" id="RHEA-COMP:14624"/>
        <dbReference type="ChEBI" id="CHEBI:15378"/>
        <dbReference type="ChEBI" id="CHEBI:17154"/>
        <dbReference type="ChEBI" id="CHEBI:29950"/>
        <dbReference type="ChEBI" id="CHEBI:57540"/>
        <dbReference type="ChEBI" id="CHEBI:140607"/>
    </reaction>
    <physiologicalReaction direction="left-to-right" evidence="5">
        <dbReference type="Rhea" id="RHEA:56613"/>
    </physiologicalReaction>
</comment>
<comment type="subunit">
    <text evidence="7 9">Interacts with PARP11; this interaction plays a key role in zika virus suppression (PubMed:34187568). Interacts with ISG15 (PubMed:39465252).</text>
</comment>
<comment type="subcellular location">
    <subcellularLocation>
        <location evidence="12">Nucleus</location>
    </subcellularLocation>
    <subcellularLocation>
        <location evidence="6 10">Golgi apparatus</location>
        <location evidence="6 10">trans-Golgi network</location>
    </subcellularLocation>
    <subcellularLocation>
        <location evidence="6">Cytoplasm</location>
        <location evidence="6">Stress granule</location>
    </subcellularLocation>
    <text evidence="6">Translocates from the Golgi complex to stress granules upon stress conditions.</text>
</comment>
<comment type="PTM">
    <text evidence="5">Auto-mono-ADP-ribosylated.</text>
</comment>
<comment type="PTM">
    <text evidence="8">Phosphorylated by PRKD1.</text>
</comment>
<comment type="similarity">
    <text evidence="12">Belongs to the ARTD/PARP family.</text>
</comment>
<dbReference type="EC" id="2.4.2.-" evidence="5 8"/>
<dbReference type="EMBL" id="AL136766">
    <property type="protein sequence ID" value="CAB66700.1"/>
    <property type="molecule type" value="mRNA"/>
</dbReference>
<dbReference type="EMBL" id="AL137255">
    <property type="protein sequence ID" value="CAB70657.1"/>
    <property type="molecule type" value="mRNA"/>
</dbReference>
<dbReference type="EMBL" id="AC004849">
    <property type="protein sequence ID" value="AAS00360.1"/>
    <property type="molecule type" value="Genomic_DNA"/>
</dbReference>
<dbReference type="EMBL" id="AC025816">
    <property type="protein sequence ID" value="AAF66161.1"/>
    <property type="molecule type" value="Genomic_DNA"/>
</dbReference>
<dbReference type="EMBL" id="AC004961">
    <property type="status" value="NOT_ANNOTATED_CDS"/>
    <property type="molecule type" value="Genomic_DNA"/>
</dbReference>
<dbReference type="EMBL" id="BC081541">
    <property type="protein sequence ID" value="AAH81541.1"/>
    <property type="molecule type" value="mRNA"/>
</dbReference>
<dbReference type="EMBL" id="AK026346">
    <property type="protein sequence ID" value="BAB15457.1"/>
    <property type="molecule type" value="mRNA"/>
</dbReference>
<dbReference type="CCDS" id="CCDS5857.1"/>
<dbReference type="PIR" id="T46327">
    <property type="entry name" value="T46327"/>
</dbReference>
<dbReference type="RefSeq" id="NP_073587.1">
    <property type="nucleotide sequence ID" value="NM_022750.4"/>
</dbReference>
<dbReference type="PDB" id="2PQF">
    <property type="method" value="X-ray"/>
    <property type="resolution" value="2.20 A"/>
    <property type="chains" value="A/B/C/D/E/F=489-684"/>
</dbReference>
<dbReference type="PDB" id="6V3W">
    <property type="method" value="X-ray"/>
    <property type="resolution" value="2.04 A"/>
    <property type="chains" value="A=489-684"/>
</dbReference>
<dbReference type="PDB" id="8XPX">
    <property type="method" value="X-ray"/>
    <property type="resolution" value="1.75 A"/>
    <property type="chains" value="A/B=489-684"/>
</dbReference>
<dbReference type="PDBsum" id="2PQF"/>
<dbReference type="PDBsum" id="6V3W"/>
<dbReference type="PDBsum" id="8XPX"/>
<dbReference type="SMR" id="Q9H0J9"/>
<dbReference type="BioGRID" id="122274">
    <property type="interactions" value="50"/>
</dbReference>
<dbReference type="FunCoup" id="Q9H0J9">
    <property type="interactions" value="1109"/>
</dbReference>
<dbReference type="IntAct" id="Q9H0J9">
    <property type="interactions" value="18"/>
</dbReference>
<dbReference type="MINT" id="Q9H0J9"/>
<dbReference type="STRING" id="9606.ENSP00000263549"/>
<dbReference type="BindingDB" id="Q9H0J9"/>
<dbReference type="ChEMBL" id="CHEMBL2429709"/>
<dbReference type="DrugCentral" id="Q9H0J9"/>
<dbReference type="GlyGen" id="Q9H0J9">
    <property type="glycosylation" value="1 site"/>
</dbReference>
<dbReference type="iPTMnet" id="Q9H0J9"/>
<dbReference type="PhosphoSitePlus" id="Q9H0J9"/>
<dbReference type="BioMuta" id="PARP12"/>
<dbReference type="DMDM" id="47117630"/>
<dbReference type="jPOST" id="Q9H0J9"/>
<dbReference type="MassIVE" id="Q9H0J9"/>
<dbReference type="PaxDb" id="9606-ENSP00000263549"/>
<dbReference type="PeptideAtlas" id="Q9H0J9"/>
<dbReference type="ProteomicsDB" id="80289"/>
<dbReference type="Pumba" id="Q9H0J9"/>
<dbReference type="Antibodypedia" id="1226">
    <property type="antibodies" value="96 antibodies from 24 providers"/>
</dbReference>
<dbReference type="DNASU" id="64761"/>
<dbReference type="Ensembl" id="ENST00000263549.8">
    <property type="protein sequence ID" value="ENSP00000263549.3"/>
    <property type="gene ID" value="ENSG00000059378.13"/>
</dbReference>
<dbReference type="GeneID" id="64761"/>
<dbReference type="KEGG" id="hsa:64761"/>
<dbReference type="MANE-Select" id="ENST00000263549.8">
    <property type="protein sequence ID" value="ENSP00000263549.3"/>
    <property type="RefSeq nucleotide sequence ID" value="NM_022750.4"/>
    <property type="RefSeq protein sequence ID" value="NP_073587.1"/>
</dbReference>
<dbReference type="UCSC" id="uc003vvl.2">
    <property type="organism name" value="human"/>
</dbReference>
<dbReference type="AGR" id="HGNC:21919"/>
<dbReference type="CTD" id="64761"/>
<dbReference type="DisGeNET" id="64761"/>
<dbReference type="GeneCards" id="PARP12"/>
<dbReference type="HGNC" id="HGNC:21919">
    <property type="gene designation" value="PARP12"/>
</dbReference>
<dbReference type="HPA" id="ENSG00000059378">
    <property type="expression patterns" value="Low tissue specificity"/>
</dbReference>
<dbReference type="MIM" id="612481">
    <property type="type" value="gene"/>
</dbReference>
<dbReference type="neXtProt" id="NX_Q9H0J9"/>
<dbReference type="OpenTargets" id="ENSG00000059378"/>
<dbReference type="PharmGKB" id="PA134953063"/>
<dbReference type="VEuPathDB" id="HostDB:ENSG00000059378"/>
<dbReference type="eggNOG" id="ENOG502QSC4">
    <property type="taxonomic scope" value="Eukaryota"/>
</dbReference>
<dbReference type="GeneTree" id="ENSGT00940000154649"/>
<dbReference type="HOGENOM" id="CLU_014825_2_1_1"/>
<dbReference type="InParanoid" id="Q9H0J9"/>
<dbReference type="OMA" id="WKDLDNM"/>
<dbReference type="OrthoDB" id="6133115at2759"/>
<dbReference type="PAN-GO" id="Q9H0J9">
    <property type="GO annotations" value="4 GO annotations based on evolutionary models"/>
</dbReference>
<dbReference type="PhylomeDB" id="Q9H0J9"/>
<dbReference type="TreeFam" id="TF338389"/>
<dbReference type="PathwayCommons" id="Q9H0J9"/>
<dbReference type="SignaLink" id="Q9H0J9"/>
<dbReference type="BioGRID-ORCS" id="64761">
    <property type="hits" value="15 hits in 1162 CRISPR screens"/>
</dbReference>
<dbReference type="CD-CODE" id="232F8A39">
    <property type="entry name" value="P-body"/>
</dbReference>
<dbReference type="CD-CODE" id="DEE660B4">
    <property type="entry name" value="Stress granule"/>
</dbReference>
<dbReference type="ChiTaRS" id="PARP12">
    <property type="organism name" value="human"/>
</dbReference>
<dbReference type="EvolutionaryTrace" id="Q9H0J9"/>
<dbReference type="GeneWiki" id="PARP12"/>
<dbReference type="GenomeRNAi" id="64761"/>
<dbReference type="Pharos" id="Q9H0J9">
    <property type="development level" value="Tchem"/>
</dbReference>
<dbReference type="PRO" id="PR:Q9H0J9"/>
<dbReference type="Proteomes" id="UP000005640">
    <property type="component" value="Chromosome 7"/>
</dbReference>
<dbReference type="RNAct" id="Q9H0J9">
    <property type="molecule type" value="protein"/>
</dbReference>
<dbReference type="Bgee" id="ENSG00000059378">
    <property type="expression patterns" value="Expressed in secondary oocyte and 167 other cell types or tissues"/>
</dbReference>
<dbReference type="ExpressionAtlas" id="Q9H0J9">
    <property type="expression patterns" value="baseline and differential"/>
</dbReference>
<dbReference type="GO" id="GO:0005634">
    <property type="term" value="C:nucleus"/>
    <property type="evidence" value="ECO:0000318"/>
    <property type="project" value="GO_Central"/>
</dbReference>
<dbReference type="GO" id="GO:0003950">
    <property type="term" value="F:NAD+ poly-ADP-ribosyltransferase activity"/>
    <property type="evidence" value="ECO:0000318"/>
    <property type="project" value="GO_Central"/>
</dbReference>
<dbReference type="GO" id="GO:1990404">
    <property type="term" value="F:NAD+-protein mono-ADP-ribosyltransferase activity"/>
    <property type="evidence" value="ECO:0000314"/>
    <property type="project" value="UniProtKB"/>
</dbReference>
<dbReference type="GO" id="GO:0140806">
    <property type="term" value="F:NAD+-protein-aspartate ADP-ribosyltransferase activity"/>
    <property type="evidence" value="ECO:0007669"/>
    <property type="project" value="RHEA"/>
</dbReference>
<dbReference type="GO" id="GO:0140803">
    <property type="term" value="F:NAD+-protein-cysteine ADP-ribosyltransferase activity"/>
    <property type="evidence" value="ECO:0007669"/>
    <property type="project" value="RHEA"/>
</dbReference>
<dbReference type="GO" id="GO:0016779">
    <property type="term" value="F:nucleotidyltransferase activity"/>
    <property type="evidence" value="ECO:0007669"/>
    <property type="project" value="UniProtKB-KW"/>
</dbReference>
<dbReference type="GO" id="GO:0003723">
    <property type="term" value="F:RNA binding"/>
    <property type="evidence" value="ECO:0007005"/>
    <property type="project" value="UniProtKB"/>
</dbReference>
<dbReference type="GO" id="GO:0008270">
    <property type="term" value="F:zinc ion binding"/>
    <property type="evidence" value="ECO:0007669"/>
    <property type="project" value="UniProtKB-KW"/>
</dbReference>
<dbReference type="GO" id="GO:0070213">
    <property type="term" value="P:protein auto-ADP-ribosylation"/>
    <property type="evidence" value="ECO:0000314"/>
    <property type="project" value="UniProtKB"/>
</dbReference>
<dbReference type="CDD" id="cd01439">
    <property type="entry name" value="TCCD_inducible_PARP_like"/>
    <property type="match status" value="1"/>
</dbReference>
<dbReference type="FunFam" id="3.30.720.50:FF:000007">
    <property type="entry name" value="CCCH-type zinc finger antiviral protein"/>
    <property type="match status" value="1"/>
</dbReference>
<dbReference type="FunFam" id="3.90.228.10:FF:000003">
    <property type="entry name" value="TCDD-inducible poly [ADP-ribose] polymerase"/>
    <property type="match status" value="1"/>
</dbReference>
<dbReference type="Gene3D" id="3.30.1370.210">
    <property type="match status" value="1"/>
</dbReference>
<dbReference type="Gene3D" id="3.30.720.50">
    <property type="match status" value="1"/>
</dbReference>
<dbReference type="Gene3D" id="3.90.228.10">
    <property type="match status" value="1"/>
</dbReference>
<dbReference type="Gene3D" id="1.10.10.10">
    <property type="entry name" value="Winged helix-like DNA-binding domain superfamily/Winged helix DNA-binding domain"/>
    <property type="match status" value="1"/>
</dbReference>
<dbReference type="InterPro" id="IPR051712">
    <property type="entry name" value="ARTD-AVP"/>
</dbReference>
<dbReference type="InterPro" id="IPR012317">
    <property type="entry name" value="Poly(ADP-ribose)pol_cat_dom"/>
</dbReference>
<dbReference type="InterPro" id="IPR036388">
    <property type="entry name" value="WH-like_DNA-bd_sf"/>
</dbReference>
<dbReference type="InterPro" id="IPR056226">
    <property type="entry name" value="WH_PARP12"/>
</dbReference>
<dbReference type="InterPro" id="IPR004170">
    <property type="entry name" value="WWE_dom"/>
</dbReference>
<dbReference type="InterPro" id="IPR037197">
    <property type="entry name" value="WWE_dom_sf"/>
</dbReference>
<dbReference type="InterPro" id="IPR000571">
    <property type="entry name" value="Znf_CCCH"/>
</dbReference>
<dbReference type="PANTHER" id="PTHR45740">
    <property type="entry name" value="POLY [ADP-RIBOSE] POLYMERASE"/>
    <property type="match status" value="1"/>
</dbReference>
<dbReference type="PANTHER" id="PTHR45740:SF6">
    <property type="entry name" value="PROTEIN MONO-ADP-RIBOSYLTRANSFERASE PARP12"/>
    <property type="match status" value="1"/>
</dbReference>
<dbReference type="Pfam" id="PF00644">
    <property type="entry name" value="PARP"/>
    <property type="match status" value="1"/>
</dbReference>
<dbReference type="Pfam" id="PF24356">
    <property type="entry name" value="WH_PARP12"/>
    <property type="match status" value="1"/>
</dbReference>
<dbReference type="Pfam" id="PF02825">
    <property type="entry name" value="WWE"/>
    <property type="match status" value="1"/>
</dbReference>
<dbReference type="Pfam" id="PF23466">
    <property type="entry name" value="WWE_4"/>
    <property type="match status" value="1"/>
</dbReference>
<dbReference type="Pfam" id="PF25261">
    <property type="entry name" value="zf-CCCH_PARP12"/>
    <property type="match status" value="2"/>
</dbReference>
<dbReference type="SMART" id="SM00356">
    <property type="entry name" value="ZnF_C3H1"/>
    <property type="match status" value="3"/>
</dbReference>
<dbReference type="SUPFAM" id="SSF56399">
    <property type="entry name" value="ADP-ribosylation"/>
    <property type="match status" value="1"/>
</dbReference>
<dbReference type="SUPFAM" id="SSF117839">
    <property type="entry name" value="WWE domain"/>
    <property type="match status" value="1"/>
</dbReference>
<dbReference type="PROSITE" id="PS51059">
    <property type="entry name" value="PARP_CATALYTIC"/>
    <property type="match status" value="1"/>
</dbReference>
<dbReference type="PROSITE" id="PS50918">
    <property type="entry name" value="WWE"/>
    <property type="match status" value="2"/>
</dbReference>
<dbReference type="PROSITE" id="PS50103">
    <property type="entry name" value="ZF_C3H1"/>
    <property type="match status" value="4"/>
</dbReference>
<feature type="chain" id="PRO_0000211341" description="Protein mono-ADP-ribosyltransferase PARP12">
    <location>
        <begin position="1"/>
        <end position="701"/>
    </location>
</feature>
<feature type="domain" description="WWE 1" evidence="1">
    <location>
        <begin position="298"/>
        <end position="361"/>
    </location>
</feature>
<feature type="domain" description="WWE 2" evidence="1">
    <location>
        <begin position="364"/>
        <end position="458"/>
    </location>
</feature>
<feature type="domain" description="PARP catalytic" evidence="2">
    <location>
        <begin position="484"/>
        <end position="698"/>
    </location>
</feature>
<feature type="zinc finger region" description="C3H1-type 1" evidence="3">
    <location>
        <begin position="94"/>
        <end position="119"/>
    </location>
</feature>
<feature type="zinc finger region" description="C3H1-type 2" evidence="3">
    <location>
        <begin position="150"/>
        <end position="179"/>
    </location>
</feature>
<feature type="zinc finger region" description="C3H1-type 3" evidence="3">
    <location>
        <begin position="180"/>
        <end position="202"/>
    </location>
</feature>
<feature type="zinc finger region" description="C3H1-type 4" evidence="3">
    <location>
        <begin position="270"/>
        <end position="297"/>
    </location>
</feature>
<feature type="zinc finger region" description="C3H1-type 3" evidence="3">
    <location>
        <begin position="271"/>
        <end position="296"/>
    </location>
</feature>
<feature type="region of interest" description="Disordered" evidence="4">
    <location>
        <begin position="234"/>
        <end position="268"/>
    </location>
</feature>
<feature type="compositionally biased region" description="Polar residues" evidence="4">
    <location>
        <begin position="259"/>
        <end position="268"/>
    </location>
</feature>
<feature type="modified residue" description="Phosphoserine" evidence="14">
    <location>
        <position position="258"/>
    </location>
</feature>
<feature type="modified residue" description="ADP-ribosylcysteine" evidence="5">
    <location>
        <position position="474"/>
    </location>
</feature>
<feature type="modified residue" description="ADP-ribosyl aspartic acid" evidence="5">
    <location>
        <position position="600"/>
    </location>
</feature>
<feature type="modified residue" description="ADP-ribosyl aspartic acid" evidence="5">
    <location>
        <position position="611"/>
    </location>
</feature>
<feature type="sequence variant" id="VAR_050463" description="In dbSNP:rs34111764.">
    <original>V</original>
    <variation>I</variation>
    <location>
        <position position="293"/>
    </location>
</feature>
<feature type="sequence variant" id="VAR_050464" description="In dbSNP:rs35456446.">
    <original>V</original>
    <variation>M</variation>
    <location>
        <position position="463"/>
    </location>
</feature>
<feature type="sequence variant" id="VAR_050465" description="In dbSNP:rs17161356.">
    <original>A</original>
    <variation>V</variation>
    <location>
        <position position="620"/>
    </location>
</feature>
<feature type="mutagenesis site" description="Catalytically inactive mutant." evidence="6">
    <original>H</original>
    <variation>A</variation>
    <location>
        <position position="564"/>
    </location>
</feature>
<feature type="mutagenesis site" description="Catalytically inactive mutant." evidence="6">
    <original>I</original>
    <variation>A</variation>
    <location>
        <position position="660"/>
    </location>
</feature>
<feature type="sequence conflict" description="In Ref. 4; BAB15457." evidence="12" ref="4">
    <original>Y</original>
    <variation>C</variation>
    <location>
        <position position="462"/>
    </location>
</feature>
<feature type="strand" evidence="15">
    <location>
        <begin position="499"/>
        <end position="502"/>
    </location>
</feature>
<feature type="helix" evidence="15">
    <location>
        <begin position="508"/>
        <end position="518"/>
    </location>
</feature>
<feature type="strand" evidence="15">
    <location>
        <begin position="524"/>
        <end position="533"/>
    </location>
</feature>
<feature type="helix" evidence="15">
    <location>
        <begin position="535"/>
        <end position="551"/>
    </location>
</feature>
<feature type="turn" evidence="15">
    <location>
        <begin position="552"/>
        <end position="554"/>
    </location>
</feature>
<feature type="strand" evidence="15">
    <location>
        <begin position="559"/>
        <end position="566"/>
    </location>
</feature>
<feature type="helix" evidence="15">
    <location>
        <begin position="568"/>
        <end position="570"/>
    </location>
</feature>
<feature type="helix" evidence="15">
    <location>
        <begin position="571"/>
        <end position="577"/>
    </location>
</feature>
<feature type="turn" evidence="15">
    <location>
        <begin position="581"/>
        <end position="583"/>
    </location>
</feature>
<feature type="strand" evidence="15">
    <location>
        <begin position="593"/>
        <end position="599"/>
    </location>
</feature>
<feature type="helix" evidence="15">
    <location>
        <begin position="601"/>
        <end position="606"/>
    </location>
</feature>
<feature type="strand" evidence="15">
    <location>
        <begin position="611"/>
        <end position="623"/>
    </location>
</feature>
<feature type="strand" evidence="15">
    <location>
        <begin position="626"/>
        <end position="629"/>
    </location>
</feature>
<feature type="strand" evidence="15">
    <location>
        <begin position="649"/>
        <end position="653"/>
    </location>
</feature>
<feature type="strand" evidence="15">
    <location>
        <begin position="655"/>
        <end position="657"/>
    </location>
</feature>
<feature type="strand" evidence="15">
    <location>
        <begin position="660"/>
        <end position="663"/>
    </location>
</feature>
<feature type="helix" evidence="15">
    <location>
        <begin position="666"/>
        <end position="668"/>
    </location>
</feature>
<feature type="strand" evidence="15">
    <location>
        <begin position="669"/>
        <end position="678"/>
    </location>
</feature>
<organism>
    <name type="scientific">Homo sapiens</name>
    <name type="common">Human</name>
    <dbReference type="NCBI Taxonomy" id="9606"/>
    <lineage>
        <taxon>Eukaryota</taxon>
        <taxon>Metazoa</taxon>
        <taxon>Chordata</taxon>
        <taxon>Craniata</taxon>
        <taxon>Vertebrata</taxon>
        <taxon>Euteleostomi</taxon>
        <taxon>Mammalia</taxon>
        <taxon>Eutheria</taxon>
        <taxon>Euarchontoglires</taxon>
        <taxon>Primates</taxon>
        <taxon>Haplorrhini</taxon>
        <taxon>Catarrhini</taxon>
        <taxon>Hominidae</taxon>
        <taxon>Homo</taxon>
    </lineage>
</organism>
<protein>
    <recommendedName>
        <fullName evidence="12">Protein mono-ADP-ribosyltransferase PARP12</fullName>
        <ecNumber evidence="5 8">2.4.2.-</ecNumber>
    </recommendedName>
    <alternativeName>
        <fullName evidence="11">ADP-ribosyltransferase diphtheria toxin-like 12</fullName>
        <shortName evidence="11">ARTD12</shortName>
    </alternativeName>
    <alternativeName>
        <fullName evidence="11">Poly [ADP-ribose] polymerase 12</fullName>
        <shortName evidence="11">PARP-12</shortName>
    </alternativeName>
    <alternativeName>
        <fullName>Zinc finger CCCH domain-containing protein 1</fullName>
    </alternativeName>
</protein>